<evidence type="ECO:0000255" key="1">
    <source>
        <dbReference type="HAMAP-Rule" id="MF_00008"/>
    </source>
</evidence>
<organism>
    <name type="scientific">Cutibacterium acnes (strain DSM 16379 / KPA171202)</name>
    <name type="common">Propionibacterium acnes</name>
    <dbReference type="NCBI Taxonomy" id="267747"/>
    <lineage>
        <taxon>Bacteria</taxon>
        <taxon>Bacillati</taxon>
        <taxon>Actinomycetota</taxon>
        <taxon>Actinomycetes</taxon>
        <taxon>Propionibacteriales</taxon>
        <taxon>Propionibacteriaceae</taxon>
        <taxon>Cutibacterium</taxon>
    </lineage>
</organism>
<proteinExistence type="inferred from homology"/>
<keyword id="KW-0963">Cytoplasm</keyword>
<keyword id="KW-0489">Methyltransferase</keyword>
<keyword id="KW-0545">Nucleotide biosynthesis</keyword>
<keyword id="KW-0808">Transferase</keyword>
<protein>
    <recommendedName>
        <fullName evidence="1">Thymidylate synthase</fullName>
        <shortName evidence="1">TS</shortName>
        <shortName evidence="1">TSase</shortName>
        <ecNumber evidence="1">2.1.1.45</ecNumber>
    </recommendedName>
</protein>
<sequence length="269" mass="30838">MQIYLDLLRRILDEGVRREDRTGTGTVSVFGHQMVFDLREGFPLVTTKKIYTRSVFGELLWFLRGDTNVGWLHDNNIHIWDEWADENGDLGPVYGHQWRSWPDDDGTIDQIANVVEQIRTNPWSRRHIVSAWNVAEIKEMALPPCHTLFQFYVTPDDRGTPTWLSCQLYQRSGDTFLGVPFNIASYALLTHLVASVTGLKPLRFVHTLGDAHVYLNHLDQVHEQLKRKPRHRPTLTVNPGIRDIDGFELSDITLTGYDPYPALPAPIAV</sequence>
<name>TYSY_CUTAK</name>
<accession>Q6A761</accession>
<reference key="1">
    <citation type="journal article" date="2004" name="Science">
        <title>The complete genome sequence of Propionibacterium acnes, a commensal of human skin.</title>
        <authorList>
            <person name="Brueggemann H."/>
            <person name="Henne A."/>
            <person name="Hoster F."/>
            <person name="Liesegang H."/>
            <person name="Wiezer A."/>
            <person name="Strittmatter A."/>
            <person name="Hujer S."/>
            <person name="Duerre P."/>
            <person name="Gottschalk G."/>
        </authorList>
    </citation>
    <scope>NUCLEOTIDE SEQUENCE [LARGE SCALE GENOMIC DNA]</scope>
    <source>
        <strain>DSM 16379 / KPA171202</strain>
    </source>
</reference>
<dbReference type="EC" id="2.1.1.45" evidence="1"/>
<dbReference type="EMBL" id="AE017283">
    <property type="protein sequence ID" value="AAT83404.1"/>
    <property type="molecule type" value="Genomic_DNA"/>
</dbReference>
<dbReference type="RefSeq" id="WP_002514671.1">
    <property type="nucleotide sequence ID" value="NZ_CP025935.1"/>
</dbReference>
<dbReference type="SMR" id="Q6A761"/>
<dbReference type="EnsemblBacteria" id="AAT83404">
    <property type="protein sequence ID" value="AAT83404"/>
    <property type="gene ID" value="PPA1672"/>
</dbReference>
<dbReference type="KEGG" id="pac:PPA1672"/>
<dbReference type="eggNOG" id="COG0207">
    <property type="taxonomic scope" value="Bacteria"/>
</dbReference>
<dbReference type="HOGENOM" id="CLU_021669_0_2_11"/>
<dbReference type="UniPathway" id="UPA00575"/>
<dbReference type="Proteomes" id="UP000000603">
    <property type="component" value="Chromosome"/>
</dbReference>
<dbReference type="GO" id="GO:0005829">
    <property type="term" value="C:cytosol"/>
    <property type="evidence" value="ECO:0007669"/>
    <property type="project" value="TreeGrafter"/>
</dbReference>
<dbReference type="GO" id="GO:0004799">
    <property type="term" value="F:thymidylate synthase activity"/>
    <property type="evidence" value="ECO:0007669"/>
    <property type="project" value="UniProtKB-UniRule"/>
</dbReference>
<dbReference type="GO" id="GO:0006231">
    <property type="term" value="P:dTMP biosynthetic process"/>
    <property type="evidence" value="ECO:0007669"/>
    <property type="project" value="UniProtKB-UniRule"/>
</dbReference>
<dbReference type="GO" id="GO:0006235">
    <property type="term" value="P:dTTP biosynthetic process"/>
    <property type="evidence" value="ECO:0007669"/>
    <property type="project" value="UniProtKB-UniRule"/>
</dbReference>
<dbReference type="GO" id="GO:0032259">
    <property type="term" value="P:methylation"/>
    <property type="evidence" value="ECO:0007669"/>
    <property type="project" value="UniProtKB-KW"/>
</dbReference>
<dbReference type="CDD" id="cd00351">
    <property type="entry name" value="TS_Pyrimidine_HMase"/>
    <property type="match status" value="1"/>
</dbReference>
<dbReference type="FunFam" id="3.30.572.10:FF:000013">
    <property type="entry name" value="Thymidylate synthase"/>
    <property type="match status" value="1"/>
</dbReference>
<dbReference type="Gene3D" id="3.30.572.10">
    <property type="entry name" value="Thymidylate synthase/dCMP hydroxymethylase domain"/>
    <property type="match status" value="1"/>
</dbReference>
<dbReference type="HAMAP" id="MF_00008">
    <property type="entry name" value="Thymidy_synth_bact"/>
    <property type="match status" value="1"/>
</dbReference>
<dbReference type="InterPro" id="IPR045097">
    <property type="entry name" value="Thymidate_synth/dCMP_Mease"/>
</dbReference>
<dbReference type="InterPro" id="IPR023451">
    <property type="entry name" value="Thymidate_synth/dCMP_Mease_dom"/>
</dbReference>
<dbReference type="InterPro" id="IPR036926">
    <property type="entry name" value="Thymidate_synth/dCMP_Mease_sf"/>
</dbReference>
<dbReference type="InterPro" id="IPR000398">
    <property type="entry name" value="Thymidylate_synthase"/>
</dbReference>
<dbReference type="InterPro" id="IPR020940">
    <property type="entry name" value="Thymidylate_synthase_AS"/>
</dbReference>
<dbReference type="NCBIfam" id="NF002497">
    <property type="entry name" value="PRK01827.1-3"/>
    <property type="match status" value="1"/>
</dbReference>
<dbReference type="NCBIfam" id="TIGR03284">
    <property type="entry name" value="thym_sym"/>
    <property type="match status" value="2"/>
</dbReference>
<dbReference type="PANTHER" id="PTHR11548:SF9">
    <property type="entry name" value="THYMIDYLATE SYNTHASE"/>
    <property type="match status" value="1"/>
</dbReference>
<dbReference type="PANTHER" id="PTHR11548">
    <property type="entry name" value="THYMIDYLATE SYNTHASE 1"/>
    <property type="match status" value="1"/>
</dbReference>
<dbReference type="Pfam" id="PF00303">
    <property type="entry name" value="Thymidylat_synt"/>
    <property type="match status" value="1"/>
</dbReference>
<dbReference type="PRINTS" id="PR00108">
    <property type="entry name" value="THYMDSNTHASE"/>
</dbReference>
<dbReference type="SUPFAM" id="SSF55831">
    <property type="entry name" value="Thymidylate synthase/dCMP hydroxymethylase"/>
    <property type="match status" value="1"/>
</dbReference>
<dbReference type="PROSITE" id="PS00091">
    <property type="entry name" value="THYMIDYLATE_SYNTHASE"/>
    <property type="match status" value="1"/>
</dbReference>
<comment type="function">
    <text evidence="1">Catalyzes the reductive methylation of 2'-deoxyuridine-5'-monophosphate (dUMP) to 2'-deoxythymidine-5'-monophosphate (dTMP) while utilizing 5,10-methylenetetrahydrofolate (mTHF) as the methyl donor and reductant in the reaction, yielding dihydrofolate (DHF) as a by-product. This enzymatic reaction provides an intracellular de novo source of dTMP, an essential precursor for DNA biosynthesis.</text>
</comment>
<comment type="catalytic activity">
    <reaction evidence="1">
        <text>dUMP + (6R)-5,10-methylene-5,6,7,8-tetrahydrofolate = 7,8-dihydrofolate + dTMP</text>
        <dbReference type="Rhea" id="RHEA:12104"/>
        <dbReference type="ChEBI" id="CHEBI:15636"/>
        <dbReference type="ChEBI" id="CHEBI:57451"/>
        <dbReference type="ChEBI" id="CHEBI:63528"/>
        <dbReference type="ChEBI" id="CHEBI:246422"/>
        <dbReference type="EC" id="2.1.1.45"/>
    </reaction>
</comment>
<comment type="pathway">
    <text evidence="1">Pyrimidine metabolism; dTTP biosynthesis.</text>
</comment>
<comment type="subunit">
    <text evidence="1">Homodimer.</text>
</comment>
<comment type="subcellular location">
    <subcellularLocation>
        <location evidence="1">Cytoplasm</location>
    </subcellularLocation>
</comment>
<comment type="similarity">
    <text evidence="1">Belongs to the thymidylate synthase family. Bacterial-type ThyA subfamily.</text>
</comment>
<feature type="chain" id="PRO_0000141003" description="Thymidylate synthase">
    <location>
        <begin position="1"/>
        <end position="269"/>
    </location>
</feature>
<feature type="active site" description="Nucleophile" evidence="1">
    <location>
        <position position="145"/>
    </location>
</feature>
<feature type="binding site" description="in other chain" evidence="1">
    <location>
        <position position="21"/>
    </location>
    <ligand>
        <name>dUMP</name>
        <dbReference type="ChEBI" id="CHEBI:246422"/>
        <note>ligand shared between dimeric partners</note>
    </ligand>
</feature>
<feature type="binding site" evidence="1">
    <location>
        <begin position="125"/>
        <end position="126"/>
    </location>
    <ligand>
        <name>dUMP</name>
        <dbReference type="ChEBI" id="CHEBI:246422"/>
        <note>ligand shared between dimeric partners</note>
    </ligand>
</feature>
<feature type="binding site" description="in other chain" evidence="1">
    <location>
        <begin position="171"/>
        <end position="174"/>
    </location>
    <ligand>
        <name>dUMP</name>
        <dbReference type="ChEBI" id="CHEBI:246422"/>
        <note>ligand shared between dimeric partners</note>
    </ligand>
</feature>
<feature type="binding site" evidence="1">
    <location>
        <position position="174"/>
    </location>
    <ligand>
        <name>(6R)-5,10-methylene-5,6,7,8-tetrahydrofolate</name>
        <dbReference type="ChEBI" id="CHEBI:15636"/>
    </ligand>
</feature>
<feature type="binding site" description="in other chain" evidence="1">
    <location>
        <position position="182"/>
    </location>
    <ligand>
        <name>dUMP</name>
        <dbReference type="ChEBI" id="CHEBI:246422"/>
        <note>ligand shared between dimeric partners</note>
    </ligand>
</feature>
<feature type="binding site" description="in other chain" evidence="1">
    <location>
        <begin position="212"/>
        <end position="214"/>
    </location>
    <ligand>
        <name>dUMP</name>
        <dbReference type="ChEBI" id="CHEBI:246422"/>
        <note>ligand shared between dimeric partners</note>
    </ligand>
</feature>
<feature type="binding site" evidence="1">
    <location>
        <position position="268"/>
    </location>
    <ligand>
        <name>(6R)-5,10-methylene-5,6,7,8-tetrahydrofolate</name>
        <dbReference type="ChEBI" id="CHEBI:15636"/>
    </ligand>
</feature>
<gene>
    <name evidence="1" type="primary">thyA</name>
    <name type="ordered locus">PPA1672</name>
</gene>